<keyword id="KW-0046">Antibiotic resistance</keyword>
<keyword id="KW-0997">Cell inner membrane</keyword>
<keyword id="KW-1003">Cell membrane</keyword>
<keyword id="KW-0133">Cell shape</keyword>
<keyword id="KW-0961">Cell wall biogenesis/degradation</keyword>
<keyword id="KW-0378">Hydrolase</keyword>
<keyword id="KW-0472">Membrane</keyword>
<keyword id="KW-0573">Peptidoglycan synthesis</keyword>
<keyword id="KW-0812">Transmembrane</keyword>
<keyword id="KW-1133">Transmembrane helix</keyword>
<name>UPPP_SODGM</name>
<dbReference type="EC" id="3.6.1.27" evidence="1"/>
<dbReference type="EMBL" id="AP008232">
    <property type="protein sequence ID" value="BAE73532.1"/>
    <property type="molecule type" value="Genomic_DNA"/>
</dbReference>
<dbReference type="RefSeq" id="WP_011410120.1">
    <property type="nucleotide sequence ID" value="NC_007712.1"/>
</dbReference>
<dbReference type="SMR" id="Q2NWE3"/>
<dbReference type="STRING" id="343509.SG0257"/>
<dbReference type="KEGG" id="sgl:SG0257"/>
<dbReference type="eggNOG" id="COG1968">
    <property type="taxonomic scope" value="Bacteria"/>
</dbReference>
<dbReference type="HOGENOM" id="CLU_060296_2_0_6"/>
<dbReference type="OrthoDB" id="9808289at2"/>
<dbReference type="BioCyc" id="SGLO343509:SGP1_RS02425-MONOMER"/>
<dbReference type="Proteomes" id="UP000001932">
    <property type="component" value="Chromosome"/>
</dbReference>
<dbReference type="GO" id="GO:0005886">
    <property type="term" value="C:plasma membrane"/>
    <property type="evidence" value="ECO:0007669"/>
    <property type="project" value="UniProtKB-SubCell"/>
</dbReference>
<dbReference type="GO" id="GO:0050380">
    <property type="term" value="F:undecaprenyl-diphosphatase activity"/>
    <property type="evidence" value="ECO:0007669"/>
    <property type="project" value="UniProtKB-UniRule"/>
</dbReference>
<dbReference type="GO" id="GO:0071555">
    <property type="term" value="P:cell wall organization"/>
    <property type="evidence" value="ECO:0007669"/>
    <property type="project" value="UniProtKB-KW"/>
</dbReference>
<dbReference type="GO" id="GO:0009252">
    <property type="term" value="P:peptidoglycan biosynthetic process"/>
    <property type="evidence" value="ECO:0007669"/>
    <property type="project" value="UniProtKB-KW"/>
</dbReference>
<dbReference type="GO" id="GO:0008360">
    <property type="term" value="P:regulation of cell shape"/>
    <property type="evidence" value="ECO:0007669"/>
    <property type="project" value="UniProtKB-KW"/>
</dbReference>
<dbReference type="GO" id="GO:0046677">
    <property type="term" value="P:response to antibiotic"/>
    <property type="evidence" value="ECO:0007669"/>
    <property type="project" value="UniProtKB-UniRule"/>
</dbReference>
<dbReference type="HAMAP" id="MF_01006">
    <property type="entry name" value="Undec_diphosphatase"/>
    <property type="match status" value="1"/>
</dbReference>
<dbReference type="InterPro" id="IPR003824">
    <property type="entry name" value="UppP"/>
</dbReference>
<dbReference type="NCBIfam" id="NF001388">
    <property type="entry name" value="PRK00281.1-1"/>
    <property type="match status" value="1"/>
</dbReference>
<dbReference type="NCBIfam" id="NF001389">
    <property type="entry name" value="PRK00281.1-2"/>
    <property type="match status" value="1"/>
</dbReference>
<dbReference type="NCBIfam" id="NF001390">
    <property type="entry name" value="PRK00281.1-4"/>
    <property type="match status" value="1"/>
</dbReference>
<dbReference type="NCBIfam" id="TIGR00753">
    <property type="entry name" value="undec_PP_bacA"/>
    <property type="match status" value="1"/>
</dbReference>
<dbReference type="PANTHER" id="PTHR30622">
    <property type="entry name" value="UNDECAPRENYL-DIPHOSPHATASE"/>
    <property type="match status" value="1"/>
</dbReference>
<dbReference type="PANTHER" id="PTHR30622:SF3">
    <property type="entry name" value="UNDECAPRENYL-DIPHOSPHATASE"/>
    <property type="match status" value="1"/>
</dbReference>
<dbReference type="Pfam" id="PF02673">
    <property type="entry name" value="BacA"/>
    <property type="match status" value="1"/>
</dbReference>
<feature type="chain" id="PRO_0000250265" description="Undecaprenyl-diphosphatase">
    <location>
        <begin position="1"/>
        <end position="273"/>
    </location>
</feature>
<feature type="transmembrane region" description="Helical" evidence="1">
    <location>
        <begin position="18"/>
        <end position="40"/>
    </location>
</feature>
<feature type="transmembrane region" description="Helical" evidence="1">
    <location>
        <begin position="45"/>
        <end position="65"/>
    </location>
</feature>
<feature type="transmembrane region" description="Helical" evidence="1">
    <location>
        <begin position="92"/>
        <end position="112"/>
    </location>
</feature>
<feature type="transmembrane region" description="Helical" evidence="1">
    <location>
        <begin position="114"/>
        <end position="134"/>
    </location>
</feature>
<feature type="transmembrane region" description="Helical" evidence="1">
    <location>
        <begin position="151"/>
        <end position="171"/>
    </location>
</feature>
<feature type="transmembrane region" description="Helical" evidence="1">
    <location>
        <begin position="189"/>
        <end position="209"/>
    </location>
</feature>
<feature type="transmembrane region" description="Helical" evidence="1">
    <location>
        <begin position="225"/>
        <end position="245"/>
    </location>
</feature>
<feature type="transmembrane region" description="Helical" evidence="1">
    <location>
        <begin position="253"/>
        <end position="273"/>
    </location>
</feature>
<reference key="1">
    <citation type="journal article" date="2006" name="Genome Res.">
        <title>Massive genome erosion and functional adaptations provide insights into the symbiotic lifestyle of Sodalis glossinidius in the tsetse host.</title>
        <authorList>
            <person name="Toh H."/>
            <person name="Weiss B.L."/>
            <person name="Perkin S.A.H."/>
            <person name="Yamashita A."/>
            <person name="Oshima K."/>
            <person name="Hattori M."/>
            <person name="Aksoy S."/>
        </authorList>
    </citation>
    <scope>NUCLEOTIDE SEQUENCE [LARGE SCALE GENOMIC DNA]</scope>
    <source>
        <strain>morsitans</strain>
    </source>
</reference>
<gene>
    <name evidence="1" type="primary">uppP</name>
    <name type="ordered locus">SG0257</name>
</gene>
<proteinExistence type="inferred from homology"/>
<protein>
    <recommendedName>
        <fullName evidence="1">Undecaprenyl-diphosphatase</fullName>
        <ecNumber evidence="1">3.6.1.27</ecNumber>
    </recommendedName>
    <alternativeName>
        <fullName evidence="1">Bacitracin resistance protein</fullName>
    </alternativeName>
    <alternativeName>
        <fullName evidence="1">Undecaprenyl pyrophosphate phosphatase</fullName>
    </alternativeName>
</protein>
<comment type="function">
    <text evidence="1">Catalyzes the dephosphorylation of undecaprenyl diphosphate (UPP). Confers resistance to bacitracin.</text>
</comment>
<comment type="catalytic activity">
    <reaction evidence="1">
        <text>di-trans,octa-cis-undecaprenyl diphosphate + H2O = di-trans,octa-cis-undecaprenyl phosphate + phosphate + H(+)</text>
        <dbReference type="Rhea" id="RHEA:28094"/>
        <dbReference type="ChEBI" id="CHEBI:15377"/>
        <dbReference type="ChEBI" id="CHEBI:15378"/>
        <dbReference type="ChEBI" id="CHEBI:43474"/>
        <dbReference type="ChEBI" id="CHEBI:58405"/>
        <dbReference type="ChEBI" id="CHEBI:60392"/>
        <dbReference type="EC" id="3.6.1.27"/>
    </reaction>
</comment>
<comment type="subcellular location">
    <subcellularLocation>
        <location evidence="1">Cell inner membrane</location>
        <topology evidence="1">Multi-pass membrane protein</topology>
    </subcellularLocation>
</comment>
<comment type="miscellaneous">
    <text>Bacitracin is thought to be involved in the inhibition of peptidoglycan synthesis by sequestering undecaprenyl diphosphate, thereby reducing the pool of lipid carrier available.</text>
</comment>
<comment type="similarity">
    <text evidence="1">Belongs to the UppP family.</text>
</comment>
<sequence length="273" mass="29821">MADMHEWVIAFILGGVEGLTEFLPVSSTGHMILVGSLLGFTDDKAKTFEVIIQLGSILAVVVVFWRRLFGLIGIHFGQVPHEGIGSGRLRLGHILLGMIPAVVLGLVFHEQIKAIFAPIYVMYALVVGGVLLLAGEWLKPKVPRAAGIDDLTYLQAFLIGCFQCLALWPGFSRSGATISGGLLVGVSRYAASEFSFILAVPMMLGATVLDLYKSLPFLSWQDLPMFAIGFVTAFVVALLAIKFFLQIIKRISFVPFAIYRFILAVVVYWILIG</sequence>
<accession>Q2NWE3</accession>
<organism>
    <name type="scientific">Sodalis glossinidius (strain morsitans)</name>
    <dbReference type="NCBI Taxonomy" id="343509"/>
    <lineage>
        <taxon>Bacteria</taxon>
        <taxon>Pseudomonadati</taxon>
        <taxon>Pseudomonadota</taxon>
        <taxon>Gammaproteobacteria</taxon>
        <taxon>Enterobacterales</taxon>
        <taxon>Bruguierivoracaceae</taxon>
        <taxon>Sodalis</taxon>
    </lineage>
</organism>
<evidence type="ECO:0000255" key="1">
    <source>
        <dbReference type="HAMAP-Rule" id="MF_01006"/>
    </source>
</evidence>